<dbReference type="EC" id="6.3.4.4" evidence="1"/>
<dbReference type="EMBL" id="CP000029">
    <property type="protein sequence ID" value="AAW53351.1"/>
    <property type="molecule type" value="Genomic_DNA"/>
</dbReference>
<dbReference type="RefSeq" id="WP_002455931.1">
    <property type="nucleotide sequence ID" value="NC_002976.3"/>
</dbReference>
<dbReference type="SMR" id="Q5HK16"/>
<dbReference type="STRING" id="176279.SERP2536"/>
<dbReference type="KEGG" id="ser:SERP2536"/>
<dbReference type="eggNOG" id="COG0104">
    <property type="taxonomic scope" value="Bacteria"/>
</dbReference>
<dbReference type="HOGENOM" id="CLU_029848_0_0_9"/>
<dbReference type="UniPathway" id="UPA00075">
    <property type="reaction ID" value="UER00335"/>
</dbReference>
<dbReference type="Proteomes" id="UP000000531">
    <property type="component" value="Chromosome"/>
</dbReference>
<dbReference type="GO" id="GO:0005737">
    <property type="term" value="C:cytoplasm"/>
    <property type="evidence" value="ECO:0007669"/>
    <property type="project" value="UniProtKB-SubCell"/>
</dbReference>
<dbReference type="GO" id="GO:0004019">
    <property type="term" value="F:adenylosuccinate synthase activity"/>
    <property type="evidence" value="ECO:0007669"/>
    <property type="project" value="UniProtKB-UniRule"/>
</dbReference>
<dbReference type="GO" id="GO:0005525">
    <property type="term" value="F:GTP binding"/>
    <property type="evidence" value="ECO:0007669"/>
    <property type="project" value="UniProtKB-UniRule"/>
</dbReference>
<dbReference type="GO" id="GO:0000287">
    <property type="term" value="F:magnesium ion binding"/>
    <property type="evidence" value="ECO:0007669"/>
    <property type="project" value="UniProtKB-UniRule"/>
</dbReference>
<dbReference type="GO" id="GO:0044208">
    <property type="term" value="P:'de novo' AMP biosynthetic process"/>
    <property type="evidence" value="ECO:0007669"/>
    <property type="project" value="UniProtKB-UniRule"/>
</dbReference>
<dbReference type="GO" id="GO:0046040">
    <property type="term" value="P:IMP metabolic process"/>
    <property type="evidence" value="ECO:0007669"/>
    <property type="project" value="TreeGrafter"/>
</dbReference>
<dbReference type="CDD" id="cd03108">
    <property type="entry name" value="AdSS"/>
    <property type="match status" value="1"/>
</dbReference>
<dbReference type="FunFam" id="1.10.300.10:FF:000001">
    <property type="entry name" value="Adenylosuccinate synthetase"/>
    <property type="match status" value="1"/>
</dbReference>
<dbReference type="FunFam" id="3.90.170.10:FF:000001">
    <property type="entry name" value="Adenylosuccinate synthetase"/>
    <property type="match status" value="1"/>
</dbReference>
<dbReference type="Gene3D" id="3.40.440.10">
    <property type="entry name" value="Adenylosuccinate Synthetase, subunit A, domain 1"/>
    <property type="match status" value="1"/>
</dbReference>
<dbReference type="Gene3D" id="1.10.300.10">
    <property type="entry name" value="Adenylosuccinate Synthetase, subunit A, domain 2"/>
    <property type="match status" value="1"/>
</dbReference>
<dbReference type="Gene3D" id="3.90.170.10">
    <property type="entry name" value="Adenylosuccinate Synthetase, subunit A, domain 3"/>
    <property type="match status" value="1"/>
</dbReference>
<dbReference type="HAMAP" id="MF_00011">
    <property type="entry name" value="Adenylosucc_synth"/>
    <property type="match status" value="1"/>
</dbReference>
<dbReference type="InterPro" id="IPR018220">
    <property type="entry name" value="Adenylosuccin_syn_GTP-bd"/>
</dbReference>
<dbReference type="InterPro" id="IPR033128">
    <property type="entry name" value="Adenylosuccin_syn_Lys_AS"/>
</dbReference>
<dbReference type="InterPro" id="IPR042109">
    <property type="entry name" value="Adenylosuccinate_synth_dom1"/>
</dbReference>
<dbReference type="InterPro" id="IPR042110">
    <property type="entry name" value="Adenylosuccinate_synth_dom2"/>
</dbReference>
<dbReference type="InterPro" id="IPR042111">
    <property type="entry name" value="Adenylosuccinate_synth_dom3"/>
</dbReference>
<dbReference type="InterPro" id="IPR001114">
    <property type="entry name" value="Adenylosuccinate_synthetase"/>
</dbReference>
<dbReference type="InterPro" id="IPR027417">
    <property type="entry name" value="P-loop_NTPase"/>
</dbReference>
<dbReference type="NCBIfam" id="NF002223">
    <property type="entry name" value="PRK01117.1"/>
    <property type="match status" value="1"/>
</dbReference>
<dbReference type="NCBIfam" id="TIGR00184">
    <property type="entry name" value="purA"/>
    <property type="match status" value="1"/>
</dbReference>
<dbReference type="PANTHER" id="PTHR11846">
    <property type="entry name" value="ADENYLOSUCCINATE SYNTHETASE"/>
    <property type="match status" value="1"/>
</dbReference>
<dbReference type="PANTHER" id="PTHR11846:SF0">
    <property type="entry name" value="ADENYLOSUCCINATE SYNTHETASE"/>
    <property type="match status" value="1"/>
</dbReference>
<dbReference type="Pfam" id="PF00709">
    <property type="entry name" value="Adenylsucc_synt"/>
    <property type="match status" value="1"/>
</dbReference>
<dbReference type="SMART" id="SM00788">
    <property type="entry name" value="Adenylsucc_synt"/>
    <property type="match status" value="1"/>
</dbReference>
<dbReference type="SUPFAM" id="SSF52540">
    <property type="entry name" value="P-loop containing nucleoside triphosphate hydrolases"/>
    <property type="match status" value="1"/>
</dbReference>
<dbReference type="PROSITE" id="PS01266">
    <property type="entry name" value="ADENYLOSUCCIN_SYN_1"/>
    <property type="match status" value="1"/>
</dbReference>
<dbReference type="PROSITE" id="PS00513">
    <property type="entry name" value="ADENYLOSUCCIN_SYN_2"/>
    <property type="match status" value="1"/>
</dbReference>
<gene>
    <name evidence="1" type="primary">purA</name>
    <name type="ordered locus">SERP2536</name>
</gene>
<protein>
    <recommendedName>
        <fullName evidence="1">Adenylosuccinate synthetase</fullName>
        <shortName evidence="1">AMPSase</shortName>
        <shortName evidence="1">AdSS</shortName>
        <ecNumber evidence="1">6.3.4.4</ecNumber>
    </recommendedName>
    <alternativeName>
        <fullName evidence="1">IMP--aspartate ligase</fullName>
    </alternativeName>
</protein>
<reference key="1">
    <citation type="journal article" date="2005" name="J. Bacteriol.">
        <title>Insights on evolution of virulence and resistance from the complete genome analysis of an early methicillin-resistant Staphylococcus aureus strain and a biofilm-producing methicillin-resistant Staphylococcus epidermidis strain.</title>
        <authorList>
            <person name="Gill S.R."/>
            <person name="Fouts D.E."/>
            <person name="Archer G.L."/>
            <person name="Mongodin E.F."/>
            <person name="DeBoy R.T."/>
            <person name="Ravel J."/>
            <person name="Paulsen I.T."/>
            <person name="Kolonay J.F."/>
            <person name="Brinkac L.M."/>
            <person name="Beanan M.J."/>
            <person name="Dodson R.J."/>
            <person name="Daugherty S.C."/>
            <person name="Madupu R."/>
            <person name="Angiuoli S.V."/>
            <person name="Durkin A.S."/>
            <person name="Haft D.H."/>
            <person name="Vamathevan J.J."/>
            <person name="Khouri H."/>
            <person name="Utterback T.R."/>
            <person name="Lee C."/>
            <person name="Dimitrov G."/>
            <person name="Jiang L."/>
            <person name="Qin H."/>
            <person name="Weidman J."/>
            <person name="Tran K."/>
            <person name="Kang K.H."/>
            <person name="Hance I.R."/>
            <person name="Nelson K.E."/>
            <person name="Fraser C.M."/>
        </authorList>
    </citation>
    <scope>NUCLEOTIDE SEQUENCE [LARGE SCALE GENOMIC DNA]</scope>
    <source>
        <strain>ATCC 35984 / DSM 28319 / BCRC 17069 / CCUG 31568 / BM 3577 / RP62A</strain>
    </source>
</reference>
<evidence type="ECO:0000255" key="1">
    <source>
        <dbReference type="HAMAP-Rule" id="MF_00011"/>
    </source>
</evidence>
<organism>
    <name type="scientific">Staphylococcus epidermidis (strain ATCC 35984 / DSM 28319 / BCRC 17069 / CCUG 31568 / BM 3577 / RP62A)</name>
    <dbReference type="NCBI Taxonomy" id="176279"/>
    <lineage>
        <taxon>Bacteria</taxon>
        <taxon>Bacillati</taxon>
        <taxon>Bacillota</taxon>
        <taxon>Bacilli</taxon>
        <taxon>Bacillales</taxon>
        <taxon>Staphylococcaceae</taxon>
        <taxon>Staphylococcus</taxon>
    </lineage>
</organism>
<comment type="function">
    <text evidence="1">Plays an important role in the de novo pathway of purine nucleotide biosynthesis. Catalyzes the first committed step in the biosynthesis of AMP from IMP.</text>
</comment>
<comment type="catalytic activity">
    <reaction evidence="1">
        <text>IMP + L-aspartate + GTP = N(6)-(1,2-dicarboxyethyl)-AMP + GDP + phosphate + 2 H(+)</text>
        <dbReference type="Rhea" id="RHEA:15753"/>
        <dbReference type="ChEBI" id="CHEBI:15378"/>
        <dbReference type="ChEBI" id="CHEBI:29991"/>
        <dbReference type="ChEBI" id="CHEBI:37565"/>
        <dbReference type="ChEBI" id="CHEBI:43474"/>
        <dbReference type="ChEBI" id="CHEBI:57567"/>
        <dbReference type="ChEBI" id="CHEBI:58053"/>
        <dbReference type="ChEBI" id="CHEBI:58189"/>
        <dbReference type="EC" id="6.3.4.4"/>
    </reaction>
</comment>
<comment type="cofactor">
    <cofactor evidence="1">
        <name>Mg(2+)</name>
        <dbReference type="ChEBI" id="CHEBI:18420"/>
    </cofactor>
    <text evidence="1">Binds 1 Mg(2+) ion per subunit.</text>
</comment>
<comment type="pathway">
    <text evidence="1">Purine metabolism; AMP biosynthesis via de novo pathway; AMP from IMP: step 1/2.</text>
</comment>
<comment type="subunit">
    <text evidence="1">Homodimer.</text>
</comment>
<comment type="subcellular location">
    <subcellularLocation>
        <location evidence="1">Cytoplasm</location>
    </subcellularLocation>
</comment>
<comment type="similarity">
    <text evidence="1">Belongs to the adenylosuccinate synthetase family.</text>
</comment>
<keyword id="KW-0963">Cytoplasm</keyword>
<keyword id="KW-0342">GTP-binding</keyword>
<keyword id="KW-0436">Ligase</keyword>
<keyword id="KW-0460">Magnesium</keyword>
<keyword id="KW-0479">Metal-binding</keyword>
<keyword id="KW-0547">Nucleotide-binding</keyword>
<keyword id="KW-0658">Purine biosynthesis</keyword>
<keyword id="KW-1185">Reference proteome</keyword>
<name>PURA_STAEQ</name>
<accession>Q5HK16</accession>
<proteinExistence type="inferred from homology"/>
<feature type="chain" id="PRO_0000095233" description="Adenylosuccinate synthetase">
    <location>
        <begin position="1"/>
        <end position="427"/>
    </location>
</feature>
<feature type="active site" description="Proton acceptor" evidence="1">
    <location>
        <position position="13"/>
    </location>
</feature>
<feature type="active site" description="Proton donor" evidence="1">
    <location>
        <position position="41"/>
    </location>
</feature>
<feature type="binding site" evidence="1">
    <location>
        <begin position="12"/>
        <end position="18"/>
    </location>
    <ligand>
        <name>GTP</name>
        <dbReference type="ChEBI" id="CHEBI:37565"/>
    </ligand>
</feature>
<feature type="binding site" description="in other chain" evidence="1">
    <location>
        <begin position="13"/>
        <end position="16"/>
    </location>
    <ligand>
        <name>IMP</name>
        <dbReference type="ChEBI" id="CHEBI:58053"/>
        <note>ligand shared between dimeric partners</note>
    </ligand>
</feature>
<feature type="binding site" evidence="1">
    <location>
        <position position="13"/>
    </location>
    <ligand>
        <name>Mg(2+)</name>
        <dbReference type="ChEBI" id="CHEBI:18420"/>
    </ligand>
</feature>
<feature type="binding site" description="in other chain" evidence="1">
    <location>
        <begin position="38"/>
        <end position="41"/>
    </location>
    <ligand>
        <name>IMP</name>
        <dbReference type="ChEBI" id="CHEBI:58053"/>
        <note>ligand shared between dimeric partners</note>
    </ligand>
</feature>
<feature type="binding site" evidence="1">
    <location>
        <begin position="40"/>
        <end position="42"/>
    </location>
    <ligand>
        <name>GTP</name>
        <dbReference type="ChEBI" id="CHEBI:37565"/>
    </ligand>
</feature>
<feature type="binding site" evidence="1">
    <location>
        <position position="40"/>
    </location>
    <ligand>
        <name>Mg(2+)</name>
        <dbReference type="ChEBI" id="CHEBI:18420"/>
    </ligand>
</feature>
<feature type="binding site" description="in other chain" evidence="1">
    <location>
        <position position="128"/>
    </location>
    <ligand>
        <name>IMP</name>
        <dbReference type="ChEBI" id="CHEBI:58053"/>
        <note>ligand shared between dimeric partners</note>
    </ligand>
</feature>
<feature type="binding site" evidence="1">
    <location>
        <position position="142"/>
    </location>
    <ligand>
        <name>IMP</name>
        <dbReference type="ChEBI" id="CHEBI:58053"/>
        <note>ligand shared between dimeric partners</note>
    </ligand>
</feature>
<feature type="binding site" description="in other chain" evidence="1">
    <location>
        <position position="223"/>
    </location>
    <ligand>
        <name>IMP</name>
        <dbReference type="ChEBI" id="CHEBI:58053"/>
        <note>ligand shared between dimeric partners</note>
    </ligand>
</feature>
<feature type="binding site" description="in other chain" evidence="1">
    <location>
        <position position="238"/>
    </location>
    <ligand>
        <name>IMP</name>
        <dbReference type="ChEBI" id="CHEBI:58053"/>
        <note>ligand shared between dimeric partners</note>
    </ligand>
</feature>
<feature type="binding site" evidence="1">
    <location>
        <begin position="298"/>
        <end position="304"/>
    </location>
    <ligand>
        <name>substrate</name>
    </ligand>
</feature>
<feature type="binding site" description="in other chain" evidence="1">
    <location>
        <position position="302"/>
    </location>
    <ligand>
        <name>IMP</name>
        <dbReference type="ChEBI" id="CHEBI:58053"/>
        <note>ligand shared between dimeric partners</note>
    </ligand>
</feature>
<feature type="binding site" evidence="1">
    <location>
        <position position="304"/>
    </location>
    <ligand>
        <name>GTP</name>
        <dbReference type="ChEBI" id="CHEBI:37565"/>
    </ligand>
</feature>
<feature type="binding site" evidence="1">
    <location>
        <begin position="330"/>
        <end position="332"/>
    </location>
    <ligand>
        <name>GTP</name>
        <dbReference type="ChEBI" id="CHEBI:37565"/>
    </ligand>
</feature>
<feature type="binding site" evidence="1">
    <location>
        <begin position="412"/>
        <end position="414"/>
    </location>
    <ligand>
        <name>GTP</name>
        <dbReference type="ChEBI" id="CHEBI:37565"/>
    </ligand>
</feature>
<sequence length="427" mass="47474">MSSIVVVGTQWGDEGKGKITDFLAEQADVIARFSGGNNAGHTIQFGGETYKLHLVPSGIFYKDKLAVIGNGVVVDPVALLKELDGLNERGISTDNLRISNRAQVILPYHLAQDEYEERRRGDNKIGTTKKGIGPAYVDKAQRIGIRMADLLEKETFERRLKENIEYKNAYFKGMFNETCPTFDEIFDEYYAAGQRLKDYVTDTAKILDDANVADEKVLFEGAQGVMLDIDHGTYPFVTSSNPVAGNVTVGTGVGPTSVSKVIGVCKSYTSRVGDGPFPTELFDEDGHHIREVGREYGTTTGRPRRVGWFDSVVLRHSRRVSGITDLSINSIDVLTGLDTVKICTAYELDGEKITEYPANLDQLRRCKPIFEELPGWTEDITGCRSLDELPENARNYLERISELCGVHISIFSVGPDREQTNLLEQLW</sequence>